<organism>
    <name type="scientific">Rattus norvegicus</name>
    <name type="common">Rat</name>
    <dbReference type="NCBI Taxonomy" id="10116"/>
    <lineage>
        <taxon>Eukaryota</taxon>
        <taxon>Metazoa</taxon>
        <taxon>Chordata</taxon>
        <taxon>Craniata</taxon>
        <taxon>Vertebrata</taxon>
        <taxon>Euteleostomi</taxon>
        <taxon>Mammalia</taxon>
        <taxon>Eutheria</taxon>
        <taxon>Euarchontoglires</taxon>
        <taxon>Glires</taxon>
        <taxon>Rodentia</taxon>
        <taxon>Myomorpha</taxon>
        <taxon>Muroidea</taxon>
        <taxon>Muridae</taxon>
        <taxon>Murinae</taxon>
        <taxon>Rattus</taxon>
    </lineage>
</organism>
<dbReference type="EMBL" id="BC087101">
    <property type="protein sequence ID" value="AAH87101.1"/>
    <property type="status" value="ALT_FRAME"/>
    <property type="molecule type" value="mRNA"/>
</dbReference>
<dbReference type="RefSeq" id="NP_001017459.2">
    <property type="nucleotide sequence ID" value="NM_001017459.2"/>
</dbReference>
<dbReference type="FunCoup" id="Q5PQN4">
    <property type="interactions" value="2618"/>
</dbReference>
<dbReference type="STRING" id="10116.ENSRNOP00000041359"/>
<dbReference type="GlyGen" id="Q5PQN4">
    <property type="glycosylation" value="1 site"/>
</dbReference>
<dbReference type="iPTMnet" id="Q5PQN4"/>
<dbReference type="PhosphoSitePlus" id="Q5PQN4"/>
<dbReference type="PaxDb" id="10116-ENSRNOP00000041359"/>
<dbReference type="Ensembl" id="ENSRNOT00000048765.6">
    <property type="protein sequence ID" value="ENSRNOP00000041359.3"/>
    <property type="gene ID" value="ENSRNOG00000007286.8"/>
</dbReference>
<dbReference type="GeneID" id="314859"/>
<dbReference type="KEGG" id="rno:314859"/>
<dbReference type="UCSC" id="RGD:1561092">
    <property type="organism name" value="rat"/>
</dbReference>
<dbReference type="AGR" id="RGD:1561092"/>
<dbReference type="CTD" id="56890"/>
<dbReference type="RGD" id="1561092">
    <property type="gene designation" value="Mdm1"/>
</dbReference>
<dbReference type="eggNOG" id="ENOG502QVRV">
    <property type="taxonomic scope" value="Eukaryota"/>
</dbReference>
<dbReference type="GeneTree" id="ENSGT00390000004106"/>
<dbReference type="HOGENOM" id="CLU_023835_0_0_1"/>
<dbReference type="InParanoid" id="Q5PQN4"/>
<dbReference type="OMA" id="LAWGEQD"/>
<dbReference type="OrthoDB" id="9999940at2759"/>
<dbReference type="PhylomeDB" id="Q5PQN4"/>
<dbReference type="TreeFam" id="TF331015"/>
<dbReference type="PRO" id="PR:Q5PQN4"/>
<dbReference type="Proteomes" id="UP000002494">
    <property type="component" value="Chromosome 7"/>
</dbReference>
<dbReference type="Bgee" id="ENSRNOG00000007286">
    <property type="expression patterns" value="Expressed in testis and 20 other cell types or tissues"/>
</dbReference>
<dbReference type="ExpressionAtlas" id="Q5PQN4">
    <property type="expression patterns" value="baseline and differential"/>
</dbReference>
<dbReference type="GO" id="GO:0034451">
    <property type="term" value="C:centriolar satellite"/>
    <property type="evidence" value="ECO:0007669"/>
    <property type="project" value="Ensembl"/>
</dbReference>
<dbReference type="GO" id="GO:0005814">
    <property type="term" value="C:centriole"/>
    <property type="evidence" value="ECO:0000250"/>
    <property type="project" value="UniProtKB"/>
</dbReference>
<dbReference type="GO" id="GO:0005813">
    <property type="term" value="C:centrosome"/>
    <property type="evidence" value="ECO:0000250"/>
    <property type="project" value="UniProtKB"/>
</dbReference>
<dbReference type="GO" id="GO:0005829">
    <property type="term" value="C:cytosol"/>
    <property type="evidence" value="ECO:0007669"/>
    <property type="project" value="Ensembl"/>
</dbReference>
<dbReference type="GO" id="GO:0005874">
    <property type="term" value="C:microtubule"/>
    <property type="evidence" value="ECO:0007669"/>
    <property type="project" value="UniProtKB-KW"/>
</dbReference>
<dbReference type="GO" id="GO:0097730">
    <property type="term" value="C:non-motile cilium"/>
    <property type="evidence" value="ECO:0000266"/>
    <property type="project" value="RGD"/>
</dbReference>
<dbReference type="GO" id="GO:0005634">
    <property type="term" value="C:nucleus"/>
    <property type="evidence" value="ECO:0000250"/>
    <property type="project" value="UniProtKB"/>
</dbReference>
<dbReference type="GO" id="GO:0008017">
    <property type="term" value="F:microtubule binding"/>
    <property type="evidence" value="ECO:0000250"/>
    <property type="project" value="UniProtKB"/>
</dbReference>
<dbReference type="GO" id="GO:0046600">
    <property type="term" value="P:negative regulation of centriole replication"/>
    <property type="evidence" value="ECO:0000250"/>
    <property type="project" value="UniProtKB"/>
</dbReference>
<dbReference type="GO" id="GO:0060041">
    <property type="term" value="P:retina development in camera-type eye"/>
    <property type="evidence" value="ECO:0000266"/>
    <property type="project" value="RGD"/>
</dbReference>
<dbReference type="InterPro" id="IPR029136">
    <property type="entry name" value="MDM1"/>
</dbReference>
<dbReference type="PANTHER" id="PTHR32078">
    <property type="entry name" value="NUCLEAR PROTEIN MDM1"/>
    <property type="match status" value="1"/>
</dbReference>
<dbReference type="PANTHER" id="PTHR32078:SF1">
    <property type="entry name" value="NUCLEAR PROTEIN MDM1"/>
    <property type="match status" value="1"/>
</dbReference>
<dbReference type="Pfam" id="PF15501">
    <property type="entry name" value="MDM1"/>
    <property type="match status" value="1"/>
</dbReference>
<reference key="1">
    <citation type="journal article" date="2004" name="Genome Res.">
        <title>The status, quality, and expansion of the NIH full-length cDNA project: the Mammalian Gene Collection (MGC).</title>
        <authorList>
            <consortium name="The MGC Project Team"/>
        </authorList>
    </citation>
    <scope>NUCLEOTIDE SEQUENCE [LARGE SCALE MRNA]</scope>
    <source>
        <tissue>Heart</tissue>
    </source>
</reference>
<reference key="2">
    <citation type="journal article" date="2012" name="Nat. Commun.">
        <title>Quantitative maps of protein phosphorylation sites across 14 different rat organs and tissues.</title>
        <authorList>
            <person name="Lundby A."/>
            <person name="Secher A."/>
            <person name="Lage K."/>
            <person name="Nordsborg N.B."/>
            <person name="Dmytriyev A."/>
            <person name="Lundby C."/>
            <person name="Olsen J.V."/>
        </authorList>
    </citation>
    <scope>PHOSPHORYLATION [LARGE SCALE ANALYSIS] AT SER-124; SER-127; SER-266; SER-283 AND SER-286</scope>
    <scope>IDENTIFICATION BY MASS SPECTROMETRY [LARGE SCALE ANALYSIS]</scope>
</reference>
<gene>
    <name type="primary">Mdm1</name>
</gene>
<feature type="chain" id="PRO_0000299062" description="Nuclear protein MDM1">
    <location>
        <begin position="1"/>
        <end position="719"/>
    </location>
</feature>
<feature type="region of interest" description="Disordered" evidence="4">
    <location>
        <begin position="78"/>
        <end position="165"/>
    </location>
</feature>
<feature type="region of interest" description="Disordered" evidence="4">
    <location>
        <begin position="453"/>
        <end position="523"/>
    </location>
</feature>
<feature type="coiled-coil region" evidence="3">
    <location>
        <begin position="339"/>
        <end position="364"/>
    </location>
</feature>
<feature type="short sequence motif" description="ST]-E-Y-X(3)-F motif 1; required for efficient microtubule binding and stabilization" evidence="1">
    <location>
        <begin position="9"/>
        <end position="15"/>
    </location>
</feature>
<feature type="short sequence motif" description="ST]-E-Y-X(3)-F motif 2; required for efficient microtubule binding and stabilization" evidence="1">
    <location>
        <begin position="192"/>
        <end position="198"/>
    </location>
</feature>
<feature type="short sequence motif" description="ST]-E-Y-X(3)-F motif 3; required for efficient microtubule binding and stabilization" evidence="1">
    <location>
        <begin position="235"/>
        <end position="241"/>
    </location>
</feature>
<feature type="short sequence motif" description="ST]-E-Y-X(3)-F motif 4; required for efficient microtubule binding and stabilization" evidence="1">
    <location>
        <begin position="306"/>
        <end position="312"/>
    </location>
</feature>
<feature type="compositionally biased region" description="Basic and acidic residues" evidence="4">
    <location>
        <begin position="93"/>
        <end position="105"/>
    </location>
</feature>
<feature type="compositionally biased region" description="Basic and acidic residues" evidence="4">
    <location>
        <begin position="123"/>
        <end position="144"/>
    </location>
</feature>
<feature type="compositionally biased region" description="Acidic residues" evidence="4">
    <location>
        <begin position="465"/>
        <end position="475"/>
    </location>
</feature>
<feature type="compositionally biased region" description="Low complexity" evidence="4">
    <location>
        <begin position="503"/>
        <end position="514"/>
    </location>
</feature>
<feature type="modified residue" description="Phosphoserine" evidence="6">
    <location>
        <position position="124"/>
    </location>
</feature>
<feature type="modified residue" description="Phosphoserine" evidence="6">
    <location>
        <position position="127"/>
    </location>
</feature>
<feature type="modified residue" description="Phosphoserine" evidence="6">
    <location>
        <position position="266"/>
    </location>
</feature>
<feature type="modified residue" description="Phosphoserine" evidence="6">
    <location>
        <position position="283"/>
    </location>
</feature>
<feature type="modified residue" description="Phosphoserine" evidence="6">
    <location>
        <position position="286"/>
    </location>
</feature>
<feature type="modified residue" description="Phosphoserine" evidence="2">
    <location>
        <position position="314"/>
    </location>
</feature>
<feature type="modified residue" description="Phosphoserine" evidence="2">
    <location>
        <position position="565"/>
    </location>
</feature>
<feature type="modified residue" description="Phosphoserine" evidence="2">
    <location>
        <position position="566"/>
    </location>
</feature>
<feature type="modified residue" description="Phosphoserine" evidence="1">
    <location>
        <position position="591"/>
    </location>
</feature>
<keyword id="KW-0175">Coiled coil</keyword>
<keyword id="KW-0963">Cytoplasm</keyword>
<keyword id="KW-0206">Cytoskeleton</keyword>
<keyword id="KW-0493">Microtubule</keyword>
<keyword id="KW-0539">Nucleus</keyword>
<keyword id="KW-0597">Phosphoprotein</keyword>
<keyword id="KW-1185">Reference proteome</keyword>
<keyword id="KW-0677">Repeat</keyword>
<proteinExistence type="evidence at protein level"/>
<name>MDM1_RAT</name>
<sequence length="719" mass="80698">MPVRFKGLSEYQRNFLWKKSYLSESYNPSVGQKYTWAGLRSDQLGITKEPSFISKRRVPYYDPQISKYLEWNGTVRENDALAPPEPQIIRTPKPQEAEQREDANHETVLPQEASRVPKRTRSHSADSRAEGASDGVEKHQDVTKNHSLVNADVELRPSTKPLPESIEPRLDRHLRKKAGLAVVPLNNALRNSEYQRQFVWKTCKETAPVCAANQVFRNKSQVIPQFQGNTFIHESEYKRNFKGLTPVKEPKLREYLKGNSSFEILSPEKKADEPLDLEVDMASEDSDQPIKKPAPWRHQRLGKVNSEYRAKFLSPAQYLYKAGAWTRVKESLSHQGSLNAMWYAEVKELREKAESYRKRVQGTHFSRDHLNQIMSDSNCCWDVSSVASSEGTISSNIQALDLAGDLTSHRTLQKHPPTKLEEKKVALAEQPLENTIRSLELPEAPTMARRKLAWDAAEGTQKEDTQEEPSGEEDGREARGKDKQVCAGELQKVDMQTSKADGPTEGSETSSVSSGKGGRLPTPRLRELGIQRTHHDLTTPAVGGAVLVSPAKAKPSALEQRRRPSSQDGLETLKKGITKKGKHRPLSLLTSPTAGMKTVDPLPLRQDCDANVLRVAEGTLPVLKNLDHQTNTPGQPSPCTLPYCHPSSRIQGRLRDPEFQHNIGKPRMNNTQLLPHGAFNDEDADRLSEISARSAVSSLQAFQTLARAQKRKENFWGKP</sequence>
<evidence type="ECO:0000250" key="1">
    <source>
        <dbReference type="UniProtKB" id="Q8TC05"/>
    </source>
</evidence>
<evidence type="ECO:0000250" key="2">
    <source>
        <dbReference type="UniProtKB" id="Q9D067"/>
    </source>
</evidence>
<evidence type="ECO:0000255" key="3"/>
<evidence type="ECO:0000256" key="4">
    <source>
        <dbReference type="SAM" id="MobiDB-lite"/>
    </source>
</evidence>
<evidence type="ECO:0000305" key="5"/>
<evidence type="ECO:0007744" key="6">
    <source>
    </source>
</evidence>
<comment type="function">
    <text evidence="1">Microtubule-binding protein that negatively regulates centriole duplication. Binds to and stabilizes microtubules.</text>
</comment>
<comment type="subcellular location">
    <subcellularLocation>
        <location evidence="1">Nucleus</location>
    </subcellularLocation>
    <subcellularLocation>
        <location evidence="1">Cytoplasm</location>
        <location evidence="1">Cytoskeleton</location>
        <location evidence="1">Microtubule organizing center</location>
        <location evidence="1">Centrosome</location>
    </subcellularLocation>
    <subcellularLocation>
        <location evidence="1">Cytoplasm</location>
        <location evidence="1">Cytoskeleton</location>
        <location evidence="1">Microtubule organizing center</location>
        <location evidence="1">Centrosome</location>
        <location evidence="1">Centriole</location>
    </subcellularLocation>
    <text evidence="1">Localizes to the centriole lumen.</text>
</comment>
<comment type="similarity">
    <text evidence="5">Belongs to the MDM1 family.</text>
</comment>
<comment type="sequence caution" evidence="5">
    <conflict type="frameshift">
        <sequence resource="EMBL-CDS" id="AAH87101"/>
    </conflict>
</comment>
<accession>Q5PQN4</accession>
<protein>
    <recommendedName>
        <fullName>Nuclear protein MDM1</fullName>
    </recommendedName>
</protein>